<comment type="function">
    <text evidence="1">Part of the ABC transporter complex MetNIQ involved in methionine import. Responsible for energy coupling to the transport system.</text>
</comment>
<comment type="catalytic activity">
    <reaction evidence="1">
        <text>L-methionine(out) + ATP + H2O = L-methionine(in) + ADP + phosphate + H(+)</text>
        <dbReference type="Rhea" id="RHEA:29779"/>
        <dbReference type="ChEBI" id="CHEBI:15377"/>
        <dbReference type="ChEBI" id="CHEBI:15378"/>
        <dbReference type="ChEBI" id="CHEBI:30616"/>
        <dbReference type="ChEBI" id="CHEBI:43474"/>
        <dbReference type="ChEBI" id="CHEBI:57844"/>
        <dbReference type="ChEBI" id="CHEBI:456216"/>
        <dbReference type="EC" id="7.4.2.11"/>
    </reaction>
</comment>
<comment type="catalytic activity">
    <reaction evidence="1">
        <text>D-methionine(out) + ATP + H2O = D-methionine(in) + ADP + phosphate + H(+)</text>
        <dbReference type="Rhea" id="RHEA:29767"/>
        <dbReference type="ChEBI" id="CHEBI:15377"/>
        <dbReference type="ChEBI" id="CHEBI:15378"/>
        <dbReference type="ChEBI" id="CHEBI:30616"/>
        <dbReference type="ChEBI" id="CHEBI:43474"/>
        <dbReference type="ChEBI" id="CHEBI:57932"/>
        <dbReference type="ChEBI" id="CHEBI:456216"/>
        <dbReference type="EC" id="7.4.2.11"/>
    </reaction>
</comment>
<comment type="subunit">
    <text evidence="1">The complex is composed of two ATP-binding proteins (MetN), two transmembrane proteins (MetI) and a solute-binding protein (MetQ).</text>
</comment>
<comment type="subcellular location">
    <subcellularLocation>
        <location evidence="1">Cell membrane</location>
        <topology evidence="1">Peripheral membrane protein</topology>
    </subcellularLocation>
</comment>
<comment type="similarity">
    <text evidence="1">Belongs to the ABC transporter superfamily. Methionine importer (TC 3.A.1.24) family.</text>
</comment>
<name>METN2_BACAN</name>
<accession>Q81ZF5</accession>
<accession>Q6I4A3</accession>
<accession>Q6KY05</accession>
<feature type="chain" id="PRO_0000270230" description="Methionine import ATP-binding protein MetN 2">
    <location>
        <begin position="1"/>
        <end position="339"/>
    </location>
</feature>
<feature type="domain" description="ABC transporter" evidence="1">
    <location>
        <begin position="2"/>
        <end position="241"/>
    </location>
</feature>
<feature type="binding site" evidence="1">
    <location>
        <begin position="38"/>
        <end position="45"/>
    </location>
    <ligand>
        <name>ATP</name>
        <dbReference type="ChEBI" id="CHEBI:30616"/>
    </ligand>
</feature>
<keyword id="KW-0029">Amino-acid transport</keyword>
<keyword id="KW-0067">ATP-binding</keyword>
<keyword id="KW-1003">Cell membrane</keyword>
<keyword id="KW-0472">Membrane</keyword>
<keyword id="KW-0547">Nucleotide-binding</keyword>
<keyword id="KW-1185">Reference proteome</keyword>
<keyword id="KW-1278">Translocase</keyword>
<keyword id="KW-0813">Transport</keyword>
<protein>
    <recommendedName>
        <fullName evidence="1">Methionine import ATP-binding protein MetN 2</fullName>
        <ecNumber evidence="1">7.4.2.11</ecNumber>
    </recommendedName>
</protein>
<proteinExistence type="inferred from homology"/>
<evidence type="ECO:0000255" key="1">
    <source>
        <dbReference type="HAMAP-Rule" id="MF_01719"/>
    </source>
</evidence>
<sequence length="339" mass="37908">MISFNNVSKVYESGGQSVHAVEDVTLSVEKGEIFGIIGFSGAGKSTLLRLVNMLERPTAGTISIDDKDITSLSTKELRKLRQRIGMIFQSFNLFNSRTVFGNIAYPLKLAKVPKNEIKERVNELLKFVGLEDKANNYPEQLSGGQKQRVGIARALATSPDILICDEATSALDPETTTEILNLLKKVNREYNLTILLITHEMHVVKEICHRVAVMEKGKVIEEGKLFDVFTQPKTTTTQNFVRSVINDHLPESVLAKIQNGGQIYRLTFTGEETGQPVLSYIAKNYNVDVNVLYGNIIELQNVLFGNLLVELQGEQREIQKALQHLRLQVQLKEVEAHAS</sequence>
<organism>
    <name type="scientific">Bacillus anthracis</name>
    <dbReference type="NCBI Taxonomy" id="1392"/>
    <lineage>
        <taxon>Bacteria</taxon>
        <taxon>Bacillati</taxon>
        <taxon>Bacillota</taxon>
        <taxon>Bacilli</taxon>
        <taxon>Bacillales</taxon>
        <taxon>Bacillaceae</taxon>
        <taxon>Bacillus</taxon>
        <taxon>Bacillus cereus group</taxon>
    </lineage>
</organism>
<reference key="1">
    <citation type="journal article" date="2003" name="Nature">
        <title>The genome sequence of Bacillus anthracis Ames and comparison to closely related bacteria.</title>
        <authorList>
            <person name="Read T.D."/>
            <person name="Peterson S.N."/>
            <person name="Tourasse N.J."/>
            <person name="Baillie L.W."/>
            <person name="Paulsen I.T."/>
            <person name="Nelson K.E."/>
            <person name="Tettelin H."/>
            <person name="Fouts D.E."/>
            <person name="Eisen J.A."/>
            <person name="Gill S.R."/>
            <person name="Holtzapple E.K."/>
            <person name="Okstad O.A."/>
            <person name="Helgason E."/>
            <person name="Rilstone J."/>
            <person name="Wu M."/>
            <person name="Kolonay J.F."/>
            <person name="Beanan M.J."/>
            <person name="Dodson R.J."/>
            <person name="Brinkac L.M."/>
            <person name="Gwinn M.L."/>
            <person name="DeBoy R.T."/>
            <person name="Madpu R."/>
            <person name="Daugherty S.C."/>
            <person name="Durkin A.S."/>
            <person name="Haft D.H."/>
            <person name="Nelson W.C."/>
            <person name="Peterson J.D."/>
            <person name="Pop M."/>
            <person name="Khouri H.M."/>
            <person name="Radune D."/>
            <person name="Benton J.L."/>
            <person name="Mahamoud Y."/>
            <person name="Jiang L."/>
            <person name="Hance I.R."/>
            <person name="Weidman J.F."/>
            <person name="Berry K.J."/>
            <person name="Plaut R.D."/>
            <person name="Wolf A.M."/>
            <person name="Watkins K.L."/>
            <person name="Nierman W.C."/>
            <person name="Hazen A."/>
            <person name="Cline R.T."/>
            <person name="Redmond C."/>
            <person name="Thwaite J.E."/>
            <person name="White O."/>
            <person name="Salzberg S.L."/>
            <person name="Thomason B."/>
            <person name="Friedlander A.M."/>
            <person name="Koehler T.M."/>
            <person name="Hanna P.C."/>
            <person name="Kolstoe A.-B."/>
            <person name="Fraser C.M."/>
        </authorList>
    </citation>
    <scope>NUCLEOTIDE SEQUENCE [LARGE SCALE GENOMIC DNA]</scope>
    <source>
        <strain>Ames / isolate Porton</strain>
    </source>
</reference>
<reference key="2">
    <citation type="submission" date="2004-01" db="EMBL/GenBank/DDBJ databases">
        <title>Complete genome sequence of Bacillus anthracis Sterne.</title>
        <authorList>
            <person name="Brettin T.S."/>
            <person name="Bruce D."/>
            <person name="Challacombe J.F."/>
            <person name="Gilna P."/>
            <person name="Han C."/>
            <person name="Hill K."/>
            <person name="Hitchcock P."/>
            <person name="Jackson P."/>
            <person name="Keim P."/>
            <person name="Longmire J."/>
            <person name="Lucas S."/>
            <person name="Okinaka R."/>
            <person name="Richardson P."/>
            <person name="Rubin E."/>
            <person name="Tice H."/>
        </authorList>
    </citation>
    <scope>NUCLEOTIDE SEQUENCE [LARGE SCALE GENOMIC DNA]</scope>
    <source>
        <strain>Sterne</strain>
    </source>
</reference>
<reference key="3">
    <citation type="journal article" date="2009" name="J. Bacteriol.">
        <title>The complete genome sequence of Bacillus anthracis Ames 'Ancestor'.</title>
        <authorList>
            <person name="Ravel J."/>
            <person name="Jiang L."/>
            <person name="Stanley S.T."/>
            <person name="Wilson M.R."/>
            <person name="Decker R.S."/>
            <person name="Read T.D."/>
            <person name="Worsham P."/>
            <person name="Keim P.S."/>
            <person name="Salzberg S.L."/>
            <person name="Fraser-Liggett C.M."/>
            <person name="Rasko D.A."/>
        </authorList>
    </citation>
    <scope>NUCLEOTIDE SEQUENCE [LARGE SCALE GENOMIC DNA]</scope>
    <source>
        <strain>Ames ancestor</strain>
    </source>
</reference>
<gene>
    <name evidence="1" type="primary">metN2</name>
    <name type="ordered locus">BA_0312</name>
    <name type="ordered locus">GBAA_0312</name>
    <name type="ordered locus">BAS0297</name>
</gene>
<dbReference type="EC" id="7.4.2.11" evidence="1"/>
<dbReference type="EMBL" id="AE016879">
    <property type="protein sequence ID" value="AAP24347.1"/>
    <property type="molecule type" value="Genomic_DNA"/>
</dbReference>
<dbReference type="EMBL" id="AE017225">
    <property type="protein sequence ID" value="AAT52628.1"/>
    <property type="molecule type" value="Genomic_DNA"/>
</dbReference>
<dbReference type="EMBL" id="AE017334">
    <property type="protein sequence ID" value="AAT29400.1"/>
    <property type="molecule type" value="Genomic_DNA"/>
</dbReference>
<dbReference type="RefSeq" id="NP_842861.1">
    <property type="nucleotide sequence ID" value="NC_003997.3"/>
</dbReference>
<dbReference type="RefSeq" id="WP_000622981.1">
    <property type="nucleotide sequence ID" value="NZ_WXXJ01000007.1"/>
</dbReference>
<dbReference type="RefSeq" id="YP_026577.1">
    <property type="nucleotide sequence ID" value="NC_005945.1"/>
</dbReference>
<dbReference type="SMR" id="Q81ZF5"/>
<dbReference type="STRING" id="261594.GBAA_0312"/>
<dbReference type="DNASU" id="1084795"/>
<dbReference type="GeneID" id="45020369"/>
<dbReference type="KEGG" id="ban:BA_0312"/>
<dbReference type="KEGG" id="banh:HYU01_01695"/>
<dbReference type="KEGG" id="bar:GBAA_0312"/>
<dbReference type="KEGG" id="bat:BAS0297"/>
<dbReference type="PATRIC" id="fig|198094.11.peg.302"/>
<dbReference type="eggNOG" id="COG1135">
    <property type="taxonomic scope" value="Bacteria"/>
</dbReference>
<dbReference type="HOGENOM" id="CLU_000604_1_3_9"/>
<dbReference type="OMA" id="NRAHVRF"/>
<dbReference type="OrthoDB" id="9802264at2"/>
<dbReference type="Proteomes" id="UP000000427">
    <property type="component" value="Chromosome"/>
</dbReference>
<dbReference type="Proteomes" id="UP000000594">
    <property type="component" value="Chromosome"/>
</dbReference>
<dbReference type="GO" id="GO:0005886">
    <property type="term" value="C:plasma membrane"/>
    <property type="evidence" value="ECO:0007669"/>
    <property type="project" value="UniProtKB-SubCell"/>
</dbReference>
<dbReference type="GO" id="GO:0033232">
    <property type="term" value="F:ABC-type D-methionine transporter activity"/>
    <property type="evidence" value="ECO:0007669"/>
    <property type="project" value="UniProtKB-EC"/>
</dbReference>
<dbReference type="GO" id="GO:0005524">
    <property type="term" value="F:ATP binding"/>
    <property type="evidence" value="ECO:0007669"/>
    <property type="project" value="UniProtKB-KW"/>
</dbReference>
<dbReference type="GO" id="GO:0016887">
    <property type="term" value="F:ATP hydrolysis activity"/>
    <property type="evidence" value="ECO:0007669"/>
    <property type="project" value="InterPro"/>
</dbReference>
<dbReference type="CDD" id="cd03258">
    <property type="entry name" value="ABC_MetN_methionine_transporter"/>
    <property type="match status" value="1"/>
</dbReference>
<dbReference type="FunFam" id="3.40.50.300:FF:000233">
    <property type="entry name" value="Methionine import ATP-binding protein MetN"/>
    <property type="match status" value="1"/>
</dbReference>
<dbReference type="Gene3D" id="3.30.70.260">
    <property type="match status" value="1"/>
</dbReference>
<dbReference type="Gene3D" id="3.40.50.300">
    <property type="entry name" value="P-loop containing nucleotide triphosphate hydrolases"/>
    <property type="match status" value="1"/>
</dbReference>
<dbReference type="InterPro" id="IPR003593">
    <property type="entry name" value="AAA+_ATPase"/>
</dbReference>
<dbReference type="InterPro" id="IPR003439">
    <property type="entry name" value="ABC_transporter-like_ATP-bd"/>
</dbReference>
<dbReference type="InterPro" id="IPR017871">
    <property type="entry name" value="ABC_transporter-like_CS"/>
</dbReference>
<dbReference type="InterPro" id="IPR045865">
    <property type="entry name" value="ACT-like_dom_sf"/>
</dbReference>
<dbReference type="InterPro" id="IPR041701">
    <property type="entry name" value="MetN_ABC"/>
</dbReference>
<dbReference type="InterPro" id="IPR050086">
    <property type="entry name" value="MetN_ABC_transporter-like"/>
</dbReference>
<dbReference type="InterPro" id="IPR018449">
    <property type="entry name" value="NIL_domain"/>
</dbReference>
<dbReference type="InterPro" id="IPR027417">
    <property type="entry name" value="P-loop_NTPase"/>
</dbReference>
<dbReference type="PANTHER" id="PTHR43166">
    <property type="entry name" value="AMINO ACID IMPORT ATP-BINDING PROTEIN"/>
    <property type="match status" value="1"/>
</dbReference>
<dbReference type="PANTHER" id="PTHR43166:SF30">
    <property type="entry name" value="METHIONINE IMPORT ATP-BINDING PROTEIN METN"/>
    <property type="match status" value="1"/>
</dbReference>
<dbReference type="Pfam" id="PF00005">
    <property type="entry name" value="ABC_tran"/>
    <property type="match status" value="1"/>
</dbReference>
<dbReference type="Pfam" id="PF09383">
    <property type="entry name" value="NIL"/>
    <property type="match status" value="1"/>
</dbReference>
<dbReference type="SMART" id="SM00382">
    <property type="entry name" value="AAA"/>
    <property type="match status" value="1"/>
</dbReference>
<dbReference type="SMART" id="SM00930">
    <property type="entry name" value="NIL"/>
    <property type="match status" value="1"/>
</dbReference>
<dbReference type="SUPFAM" id="SSF55021">
    <property type="entry name" value="ACT-like"/>
    <property type="match status" value="1"/>
</dbReference>
<dbReference type="SUPFAM" id="SSF52540">
    <property type="entry name" value="P-loop containing nucleoside triphosphate hydrolases"/>
    <property type="match status" value="1"/>
</dbReference>
<dbReference type="PROSITE" id="PS00211">
    <property type="entry name" value="ABC_TRANSPORTER_1"/>
    <property type="match status" value="1"/>
</dbReference>
<dbReference type="PROSITE" id="PS50893">
    <property type="entry name" value="ABC_TRANSPORTER_2"/>
    <property type="match status" value="1"/>
</dbReference>
<dbReference type="PROSITE" id="PS51264">
    <property type="entry name" value="METN"/>
    <property type="match status" value="1"/>
</dbReference>